<reference key="1">
    <citation type="journal article" date="2003" name="Proc. Natl. Acad. Sci. U.S.A.">
        <title>The complete genome sequence of the carcinogenic bacterium Helicobacter hepaticus.</title>
        <authorList>
            <person name="Suerbaum S."/>
            <person name="Josenhans C."/>
            <person name="Sterzenbach T."/>
            <person name="Drescher B."/>
            <person name="Brandt P."/>
            <person name="Bell M."/>
            <person name="Droege M."/>
            <person name="Fartmann B."/>
            <person name="Fischer H.-P."/>
            <person name="Ge Z."/>
            <person name="Hoerster A."/>
            <person name="Holland R."/>
            <person name="Klein K."/>
            <person name="Koenig J."/>
            <person name="Macko L."/>
            <person name="Mendz G.L."/>
            <person name="Nyakatura G."/>
            <person name="Schauer D.B."/>
            <person name="Shen Z."/>
            <person name="Weber J."/>
            <person name="Frosch M."/>
            <person name="Fox J.G."/>
        </authorList>
    </citation>
    <scope>NUCLEOTIDE SEQUENCE [LARGE SCALE GENOMIC DNA]</scope>
    <source>
        <strain>ATCC 51449 / 3B1</strain>
    </source>
</reference>
<keyword id="KW-0067">ATP-binding</keyword>
<keyword id="KW-0963">Cytoplasm</keyword>
<keyword id="KW-0418">Kinase</keyword>
<keyword id="KW-0460">Magnesium</keyword>
<keyword id="KW-0479">Metal-binding</keyword>
<keyword id="KW-0545">Nucleotide biosynthesis</keyword>
<keyword id="KW-0547">Nucleotide-binding</keyword>
<keyword id="KW-1185">Reference proteome</keyword>
<keyword id="KW-0808">Transferase</keyword>
<accession>Q7VFY9</accession>
<protein>
    <recommendedName>
        <fullName evidence="1">Ribose-phosphate pyrophosphokinase</fullName>
        <shortName evidence="1">RPPK</shortName>
        <ecNumber evidence="1">2.7.6.1</ecNumber>
    </recommendedName>
    <alternativeName>
        <fullName evidence="1">5-phospho-D-ribosyl alpha-1-diphosphate synthase</fullName>
    </alternativeName>
    <alternativeName>
        <fullName evidence="1">Phosphoribosyl diphosphate synthase</fullName>
    </alternativeName>
    <alternativeName>
        <fullName evidence="1">Phosphoribosyl pyrophosphate synthase</fullName>
        <shortName evidence="1">P-Rib-PP synthase</shortName>
        <shortName evidence="1">PRPP synthase</shortName>
        <shortName evidence="1">PRPPase</shortName>
    </alternativeName>
</protein>
<proteinExistence type="inferred from homology"/>
<gene>
    <name evidence="1" type="primary">prs</name>
    <name type="synonym">prsA</name>
    <name type="ordered locus">HH_1536</name>
</gene>
<name>KPRS_HELHP</name>
<evidence type="ECO:0000255" key="1">
    <source>
        <dbReference type="HAMAP-Rule" id="MF_00583"/>
    </source>
</evidence>
<sequence length="309" mass="33903">MRGFKIFSGSAHTLFSNEVAKCLDISLSKTTINRFSDGEINVQIGESVRGKDIFIIQPTCAPANDHLMELLIMTDALKRSGAKNINAVIPYFGYARQDRKVVPRVPITAKLVANLIEQSGIHRVITMDLHAEQIQGFFDIPVDNLYGSIVFRDYLKTKSFKNPIVASPDIGGVARARHFADRIGMDLVIVDKKRERANESEVMNIIGDVDGKDVILIDDMIDTAGTMCKAADVLKSRGANSVIALGTHPVLSGPALERIAKSALDEVVVTNSIPLRVAHPKIKVLSVAPLFAEVIRRICHNESVNSLFF</sequence>
<feature type="chain" id="PRO_0000141143" description="Ribose-phosphate pyrophosphokinase">
    <location>
        <begin position="1"/>
        <end position="309"/>
    </location>
</feature>
<feature type="active site" evidence="1">
    <location>
        <position position="192"/>
    </location>
</feature>
<feature type="binding site" evidence="1">
    <location>
        <begin position="37"/>
        <end position="39"/>
    </location>
    <ligand>
        <name>ATP</name>
        <dbReference type="ChEBI" id="CHEBI:30616"/>
    </ligand>
</feature>
<feature type="binding site" evidence="1">
    <location>
        <begin position="96"/>
        <end position="97"/>
    </location>
    <ligand>
        <name>ATP</name>
        <dbReference type="ChEBI" id="CHEBI:30616"/>
    </ligand>
</feature>
<feature type="binding site" evidence="1">
    <location>
        <position position="130"/>
    </location>
    <ligand>
        <name>Mg(2+)</name>
        <dbReference type="ChEBI" id="CHEBI:18420"/>
        <label>1</label>
    </ligand>
</feature>
<feature type="binding site" evidence="1">
    <location>
        <position position="169"/>
    </location>
    <ligand>
        <name>Mg(2+)</name>
        <dbReference type="ChEBI" id="CHEBI:18420"/>
        <label>2</label>
    </ligand>
</feature>
<feature type="binding site" evidence="1">
    <location>
        <position position="194"/>
    </location>
    <ligand>
        <name>D-ribose 5-phosphate</name>
        <dbReference type="ChEBI" id="CHEBI:78346"/>
    </ligand>
</feature>
<feature type="binding site" evidence="1">
    <location>
        <position position="218"/>
    </location>
    <ligand>
        <name>D-ribose 5-phosphate</name>
        <dbReference type="ChEBI" id="CHEBI:78346"/>
    </ligand>
</feature>
<feature type="binding site" evidence="1">
    <location>
        <begin position="222"/>
        <end position="226"/>
    </location>
    <ligand>
        <name>D-ribose 5-phosphate</name>
        <dbReference type="ChEBI" id="CHEBI:78346"/>
    </ligand>
</feature>
<dbReference type="EC" id="2.7.6.1" evidence="1"/>
<dbReference type="EMBL" id="AE017125">
    <property type="protein sequence ID" value="AAP78133.1"/>
    <property type="molecule type" value="Genomic_DNA"/>
</dbReference>
<dbReference type="RefSeq" id="WP_011116376.1">
    <property type="nucleotide sequence ID" value="NC_004917.1"/>
</dbReference>
<dbReference type="SMR" id="Q7VFY9"/>
<dbReference type="STRING" id="235279.HH_1536"/>
<dbReference type="KEGG" id="hhe:HH_1536"/>
<dbReference type="eggNOG" id="COG0462">
    <property type="taxonomic scope" value="Bacteria"/>
</dbReference>
<dbReference type="HOGENOM" id="CLU_033546_4_0_7"/>
<dbReference type="OrthoDB" id="9777067at2"/>
<dbReference type="UniPathway" id="UPA00087">
    <property type="reaction ID" value="UER00172"/>
</dbReference>
<dbReference type="Proteomes" id="UP000002495">
    <property type="component" value="Chromosome"/>
</dbReference>
<dbReference type="GO" id="GO:0005737">
    <property type="term" value="C:cytoplasm"/>
    <property type="evidence" value="ECO:0007669"/>
    <property type="project" value="UniProtKB-SubCell"/>
</dbReference>
<dbReference type="GO" id="GO:0002189">
    <property type="term" value="C:ribose phosphate diphosphokinase complex"/>
    <property type="evidence" value="ECO:0007669"/>
    <property type="project" value="TreeGrafter"/>
</dbReference>
<dbReference type="GO" id="GO:0005524">
    <property type="term" value="F:ATP binding"/>
    <property type="evidence" value="ECO:0007669"/>
    <property type="project" value="UniProtKB-KW"/>
</dbReference>
<dbReference type="GO" id="GO:0016301">
    <property type="term" value="F:kinase activity"/>
    <property type="evidence" value="ECO:0007669"/>
    <property type="project" value="UniProtKB-KW"/>
</dbReference>
<dbReference type="GO" id="GO:0000287">
    <property type="term" value="F:magnesium ion binding"/>
    <property type="evidence" value="ECO:0007669"/>
    <property type="project" value="UniProtKB-UniRule"/>
</dbReference>
<dbReference type="GO" id="GO:0004749">
    <property type="term" value="F:ribose phosphate diphosphokinase activity"/>
    <property type="evidence" value="ECO:0007669"/>
    <property type="project" value="UniProtKB-UniRule"/>
</dbReference>
<dbReference type="GO" id="GO:0006015">
    <property type="term" value="P:5-phosphoribose 1-diphosphate biosynthetic process"/>
    <property type="evidence" value="ECO:0007669"/>
    <property type="project" value="UniProtKB-UniRule"/>
</dbReference>
<dbReference type="GO" id="GO:0006164">
    <property type="term" value="P:purine nucleotide biosynthetic process"/>
    <property type="evidence" value="ECO:0007669"/>
    <property type="project" value="TreeGrafter"/>
</dbReference>
<dbReference type="GO" id="GO:0009156">
    <property type="term" value="P:ribonucleoside monophosphate biosynthetic process"/>
    <property type="evidence" value="ECO:0007669"/>
    <property type="project" value="InterPro"/>
</dbReference>
<dbReference type="CDD" id="cd06223">
    <property type="entry name" value="PRTases_typeI"/>
    <property type="match status" value="1"/>
</dbReference>
<dbReference type="FunFam" id="3.40.50.2020:FF:000001">
    <property type="entry name" value="Ribose-phosphate pyrophosphokinase"/>
    <property type="match status" value="1"/>
</dbReference>
<dbReference type="FunFam" id="3.40.50.2020:FF:000002">
    <property type="entry name" value="Ribose-phosphate pyrophosphokinase"/>
    <property type="match status" value="1"/>
</dbReference>
<dbReference type="Gene3D" id="3.40.50.2020">
    <property type="match status" value="2"/>
</dbReference>
<dbReference type="HAMAP" id="MF_00583_B">
    <property type="entry name" value="RibP_PPkinase_B"/>
    <property type="match status" value="1"/>
</dbReference>
<dbReference type="InterPro" id="IPR000842">
    <property type="entry name" value="PRib_PP_synth_CS"/>
</dbReference>
<dbReference type="InterPro" id="IPR029099">
    <property type="entry name" value="Pribosyltran_N"/>
</dbReference>
<dbReference type="InterPro" id="IPR000836">
    <property type="entry name" value="PRibTrfase_dom"/>
</dbReference>
<dbReference type="InterPro" id="IPR029057">
    <property type="entry name" value="PRTase-like"/>
</dbReference>
<dbReference type="InterPro" id="IPR005946">
    <property type="entry name" value="Rib-P_diPkinase"/>
</dbReference>
<dbReference type="InterPro" id="IPR037515">
    <property type="entry name" value="Rib-P_diPkinase_bac"/>
</dbReference>
<dbReference type="NCBIfam" id="NF002320">
    <property type="entry name" value="PRK01259.1"/>
    <property type="match status" value="1"/>
</dbReference>
<dbReference type="NCBIfam" id="TIGR01251">
    <property type="entry name" value="ribP_PPkin"/>
    <property type="match status" value="1"/>
</dbReference>
<dbReference type="PANTHER" id="PTHR10210">
    <property type="entry name" value="RIBOSE-PHOSPHATE DIPHOSPHOKINASE FAMILY MEMBER"/>
    <property type="match status" value="1"/>
</dbReference>
<dbReference type="PANTHER" id="PTHR10210:SF41">
    <property type="entry name" value="RIBOSE-PHOSPHATE PYROPHOSPHOKINASE 1, CHLOROPLASTIC"/>
    <property type="match status" value="1"/>
</dbReference>
<dbReference type="Pfam" id="PF14572">
    <property type="entry name" value="Pribosyl_synth"/>
    <property type="match status" value="1"/>
</dbReference>
<dbReference type="Pfam" id="PF13793">
    <property type="entry name" value="Pribosyltran_N"/>
    <property type="match status" value="1"/>
</dbReference>
<dbReference type="SMART" id="SM01400">
    <property type="entry name" value="Pribosyltran_N"/>
    <property type="match status" value="1"/>
</dbReference>
<dbReference type="SUPFAM" id="SSF53271">
    <property type="entry name" value="PRTase-like"/>
    <property type="match status" value="1"/>
</dbReference>
<dbReference type="PROSITE" id="PS00114">
    <property type="entry name" value="PRPP_SYNTHASE"/>
    <property type="match status" value="1"/>
</dbReference>
<organism>
    <name type="scientific">Helicobacter hepaticus (strain ATCC 51449 / 3B1)</name>
    <dbReference type="NCBI Taxonomy" id="235279"/>
    <lineage>
        <taxon>Bacteria</taxon>
        <taxon>Pseudomonadati</taxon>
        <taxon>Campylobacterota</taxon>
        <taxon>Epsilonproteobacteria</taxon>
        <taxon>Campylobacterales</taxon>
        <taxon>Helicobacteraceae</taxon>
        <taxon>Helicobacter</taxon>
    </lineage>
</organism>
<comment type="function">
    <text evidence="1">Involved in the biosynthesis of the central metabolite phospho-alpha-D-ribosyl-1-pyrophosphate (PRPP) via the transfer of pyrophosphoryl group from ATP to 1-hydroxyl of ribose-5-phosphate (Rib-5-P).</text>
</comment>
<comment type="catalytic activity">
    <reaction evidence="1">
        <text>D-ribose 5-phosphate + ATP = 5-phospho-alpha-D-ribose 1-diphosphate + AMP + H(+)</text>
        <dbReference type="Rhea" id="RHEA:15609"/>
        <dbReference type="ChEBI" id="CHEBI:15378"/>
        <dbReference type="ChEBI" id="CHEBI:30616"/>
        <dbReference type="ChEBI" id="CHEBI:58017"/>
        <dbReference type="ChEBI" id="CHEBI:78346"/>
        <dbReference type="ChEBI" id="CHEBI:456215"/>
        <dbReference type="EC" id="2.7.6.1"/>
    </reaction>
</comment>
<comment type="cofactor">
    <cofactor evidence="1">
        <name>Mg(2+)</name>
        <dbReference type="ChEBI" id="CHEBI:18420"/>
    </cofactor>
    <text evidence="1">Binds 2 Mg(2+) ions per subunit.</text>
</comment>
<comment type="pathway">
    <text evidence="1">Metabolic intermediate biosynthesis; 5-phospho-alpha-D-ribose 1-diphosphate biosynthesis; 5-phospho-alpha-D-ribose 1-diphosphate from D-ribose 5-phosphate (route I): step 1/1.</text>
</comment>
<comment type="subunit">
    <text evidence="1">Homohexamer.</text>
</comment>
<comment type="subcellular location">
    <subcellularLocation>
        <location evidence="1">Cytoplasm</location>
    </subcellularLocation>
</comment>
<comment type="similarity">
    <text evidence="1">Belongs to the ribose-phosphate pyrophosphokinase family. Class I subfamily.</text>
</comment>